<proteinExistence type="inferred from homology"/>
<keyword id="KW-0328">Glycosyltransferase</keyword>
<keyword id="KW-0441">Lipid A biosynthesis</keyword>
<keyword id="KW-0444">Lipid biosynthesis</keyword>
<keyword id="KW-0443">Lipid metabolism</keyword>
<keyword id="KW-0808">Transferase</keyword>
<gene>
    <name evidence="1" type="primary">lpxB</name>
    <name type="ordered locus">CbuK_1635</name>
</gene>
<name>LPXB_COXB1</name>
<dbReference type="EC" id="2.4.1.182" evidence="1"/>
<dbReference type="EMBL" id="CP001020">
    <property type="protein sequence ID" value="ACJ20785.1"/>
    <property type="molecule type" value="Genomic_DNA"/>
</dbReference>
<dbReference type="RefSeq" id="WP_005771934.1">
    <property type="nucleotide sequence ID" value="NC_011528.1"/>
</dbReference>
<dbReference type="SMR" id="B6J9H1"/>
<dbReference type="CAZy" id="GT19">
    <property type="family name" value="Glycosyltransferase Family 19"/>
</dbReference>
<dbReference type="KEGG" id="cbc:CbuK_1635"/>
<dbReference type="HOGENOM" id="CLU_036577_3_1_6"/>
<dbReference type="UniPathway" id="UPA00973"/>
<dbReference type="GO" id="GO:0016020">
    <property type="term" value="C:membrane"/>
    <property type="evidence" value="ECO:0007669"/>
    <property type="project" value="GOC"/>
</dbReference>
<dbReference type="GO" id="GO:0008915">
    <property type="term" value="F:lipid-A-disaccharide synthase activity"/>
    <property type="evidence" value="ECO:0007669"/>
    <property type="project" value="UniProtKB-UniRule"/>
</dbReference>
<dbReference type="GO" id="GO:0005543">
    <property type="term" value="F:phospholipid binding"/>
    <property type="evidence" value="ECO:0007669"/>
    <property type="project" value="TreeGrafter"/>
</dbReference>
<dbReference type="GO" id="GO:0009245">
    <property type="term" value="P:lipid A biosynthetic process"/>
    <property type="evidence" value="ECO:0007669"/>
    <property type="project" value="UniProtKB-UniRule"/>
</dbReference>
<dbReference type="HAMAP" id="MF_00392">
    <property type="entry name" value="LpxB"/>
    <property type="match status" value="1"/>
</dbReference>
<dbReference type="InterPro" id="IPR003835">
    <property type="entry name" value="Glyco_trans_19"/>
</dbReference>
<dbReference type="NCBIfam" id="TIGR00215">
    <property type="entry name" value="lpxB"/>
    <property type="match status" value="1"/>
</dbReference>
<dbReference type="PANTHER" id="PTHR30372">
    <property type="entry name" value="LIPID-A-DISACCHARIDE SYNTHASE"/>
    <property type="match status" value="1"/>
</dbReference>
<dbReference type="PANTHER" id="PTHR30372:SF4">
    <property type="entry name" value="LIPID-A-DISACCHARIDE SYNTHASE, MITOCHONDRIAL-RELATED"/>
    <property type="match status" value="1"/>
</dbReference>
<dbReference type="Pfam" id="PF02684">
    <property type="entry name" value="LpxB"/>
    <property type="match status" value="1"/>
</dbReference>
<dbReference type="SUPFAM" id="SSF53756">
    <property type="entry name" value="UDP-Glycosyltransferase/glycogen phosphorylase"/>
    <property type="match status" value="1"/>
</dbReference>
<sequence>MSNKSVLLIAGEPSGDLLGAHLAQSLKSLEPNLKLAGMGGKRMREAGVEVFINADKLAVVGLLEILRQFRDIRHAMQTLKRYFKKTPPDLVVFIDYPGFNLHMAKQAKKAGIKVLYYVSPQIWAWRYGRIKKIKKYVDHMAVLFDFEEKLYQKENVPVSFVGHPLANAPTPSLSRNEICKQFNLDLDKPIVALFPGSREQEINKLLPMMVQAGKLIQTQIPTVQFILPLALNLALDKIRPFLSPEIKVIQNDISHVLAIAHAAVAASGTVTLEIALQQVPLVIIYKVAPLTFWLGKKLIRLSFIGLCNLVSPEPVAVELLQQDATPQAIADEVFQLLNNHNYRQSIIGKLGHLRPQLDRGNAAQNVAKVVHNLIFS</sequence>
<organism>
    <name type="scientific">Coxiella burnetii (strain CbuK_Q154)</name>
    <name type="common">Coxiella burnetii (strain Q154)</name>
    <dbReference type="NCBI Taxonomy" id="434924"/>
    <lineage>
        <taxon>Bacteria</taxon>
        <taxon>Pseudomonadati</taxon>
        <taxon>Pseudomonadota</taxon>
        <taxon>Gammaproteobacteria</taxon>
        <taxon>Legionellales</taxon>
        <taxon>Coxiellaceae</taxon>
        <taxon>Coxiella</taxon>
    </lineage>
</organism>
<protein>
    <recommendedName>
        <fullName evidence="1">Lipid-A-disaccharide synthase</fullName>
        <ecNumber evidence="1">2.4.1.182</ecNumber>
    </recommendedName>
</protein>
<accession>B6J9H1</accession>
<feature type="chain" id="PRO_1000191471" description="Lipid-A-disaccharide synthase">
    <location>
        <begin position="1"/>
        <end position="376"/>
    </location>
</feature>
<reference key="1">
    <citation type="journal article" date="2009" name="Infect. Immun.">
        <title>Comparative genomics reveal extensive transposon-mediated genomic plasticity and diversity among potential effector proteins within the genus Coxiella.</title>
        <authorList>
            <person name="Beare P.A."/>
            <person name="Unsworth N."/>
            <person name="Andoh M."/>
            <person name="Voth D.E."/>
            <person name="Omsland A."/>
            <person name="Gilk S.D."/>
            <person name="Williams K.P."/>
            <person name="Sobral B.W."/>
            <person name="Kupko J.J. III"/>
            <person name="Porcella S.F."/>
            <person name="Samuel J.E."/>
            <person name="Heinzen R.A."/>
        </authorList>
    </citation>
    <scope>NUCLEOTIDE SEQUENCE [LARGE SCALE GENOMIC DNA]</scope>
    <source>
        <strain>CbuK_Q154</strain>
    </source>
</reference>
<evidence type="ECO:0000255" key="1">
    <source>
        <dbReference type="HAMAP-Rule" id="MF_00392"/>
    </source>
</evidence>
<comment type="function">
    <text evidence="1">Condensation of UDP-2,3-diacylglucosamine and 2,3-diacylglucosamine-1-phosphate to form lipid A disaccharide, a precursor of lipid A, a phosphorylated glycolipid that anchors the lipopolysaccharide to the outer membrane of the cell.</text>
</comment>
<comment type="catalytic activity">
    <reaction evidence="1">
        <text>a lipid X + a UDP-2-N,3-O-bis[(3R)-3-hydroxyacyl]-alpha-D-glucosamine = a lipid A disaccharide + UDP + H(+)</text>
        <dbReference type="Rhea" id="RHEA:67828"/>
        <dbReference type="ChEBI" id="CHEBI:15378"/>
        <dbReference type="ChEBI" id="CHEBI:58223"/>
        <dbReference type="ChEBI" id="CHEBI:137748"/>
        <dbReference type="ChEBI" id="CHEBI:176338"/>
        <dbReference type="ChEBI" id="CHEBI:176343"/>
        <dbReference type="EC" id="2.4.1.182"/>
    </reaction>
</comment>
<comment type="pathway">
    <text evidence="1">Bacterial outer membrane biogenesis; LPS lipid A biosynthesis.</text>
</comment>
<comment type="similarity">
    <text evidence="1">Belongs to the LpxB family.</text>
</comment>